<proteinExistence type="inferred from homology"/>
<feature type="chain" id="PRO_1000130921" description="Elongation factor P-like protein">
    <location>
        <begin position="1"/>
        <end position="190"/>
    </location>
</feature>
<name>EFPL_SALDC</name>
<evidence type="ECO:0000255" key="1">
    <source>
        <dbReference type="HAMAP-Rule" id="MF_00646"/>
    </source>
</evidence>
<gene>
    <name evidence="1" type="primary">yeiP</name>
    <name type="ordered locus">SeD_A2562</name>
</gene>
<dbReference type="EMBL" id="CP001144">
    <property type="protein sequence ID" value="ACH77411.1"/>
    <property type="molecule type" value="Genomic_DNA"/>
</dbReference>
<dbReference type="RefSeq" id="WP_001136822.1">
    <property type="nucleotide sequence ID" value="NC_011205.1"/>
</dbReference>
<dbReference type="SMR" id="B5FNL7"/>
<dbReference type="GeneID" id="66756682"/>
<dbReference type="KEGG" id="sed:SeD_A2562"/>
<dbReference type="HOGENOM" id="CLU_074944_2_0_6"/>
<dbReference type="Proteomes" id="UP000008322">
    <property type="component" value="Chromosome"/>
</dbReference>
<dbReference type="GO" id="GO:0005829">
    <property type="term" value="C:cytosol"/>
    <property type="evidence" value="ECO:0007669"/>
    <property type="project" value="UniProtKB-ARBA"/>
</dbReference>
<dbReference type="GO" id="GO:0003746">
    <property type="term" value="F:translation elongation factor activity"/>
    <property type="evidence" value="ECO:0007669"/>
    <property type="project" value="UniProtKB-UniRule"/>
</dbReference>
<dbReference type="GO" id="GO:0043043">
    <property type="term" value="P:peptide biosynthetic process"/>
    <property type="evidence" value="ECO:0007669"/>
    <property type="project" value="InterPro"/>
</dbReference>
<dbReference type="CDD" id="cd04470">
    <property type="entry name" value="S1_EF-P_repeat_1"/>
    <property type="match status" value="1"/>
</dbReference>
<dbReference type="CDD" id="cd05794">
    <property type="entry name" value="S1_EF-P_repeat_2"/>
    <property type="match status" value="1"/>
</dbReference>
<dbReference type="FunFam" id="2.40.50.140:FF:000004">
    <property type="entry name" value="Elongation factor P"/>
    <property type="match status" value="1"/>
</dbReference>
<dbReference type="FunFam" id="2.30.30.30:FF:000011">
    <property type="entry name" value="Elongation factor P-like protein"/>
    <property type="match status" value="1"/>
</dbReference>
<dbReference type="FunFam" id="2.40.50.140:FF:000053">
    <property type="entry name" value="Elongation factor P-like protein"/>
    <property type="match status" value="1"/>
</dbReference>
<dbReference type="Gene3D" id="2.30.30.30">
    <property type="match status" value="1"/>
</dbReference>
<dbReference type="Gene3D" id="2.40.50.140">
    <property type="entry name" value="Nucleic acid-binding proteins"/>
    <property type="match status" value="2"/>
</dbReference>
<dbReference type="HAMAP" id="MF_00646">
    <property type="entry name" value="EFP"/>
    <property type="match status" value="1"/>
</dbReference>
<dbReference type="InterPro" id="IPR015365">
    <property type="entry name" value="Elong-fact-P_C"/>
</dbReference>
<dbReference type="InterPro" id="IPR012340">
    <property type="entry name" value="NA-bd_OB-fold"/>
</dbReference>
<dbReference type="InterPro" id="IPR014722">
    <property type="entry name" value="Rib_uL2_dom2"/>
</dbReference>
<dbReference type="InterPro" id="IPR020599">
    <property type="entry name" value="Transl_elong_fac_P/YeiP"/>
</dbReference>
<dbReference type="InterPro" id="IPR013185">
    <property type="entry name" value="Transl_elong_KOW-like"/>
</dbReference>
<dbReference type="InterPro" id="IPR011897">
    <property type="entry name" value="Transl_elong_p-like_YeiP"/>
</dbReference>
<dbReference type="InterPro" id="IPR001059">
    <property type="entry name" value="Transl_elong_P/YeiP_cen"/>
</dbReference>
<dbReference type="InterPro" id="IPR013852">
    <property type="entry name" value="Transl_elong_P/YeiP_CS"/>
</dbReference>
<dbReference type="InterPro" id="IPR008991">
    <property type="entry name" value="Translation_prot_SH3-like_sf"/>
</dbReference>
<dbReference type="NCBIfam" id="NF001810">
    <property type="entry name" value="PRK00529.1"/>
    <property type="match status" value="1"/>
</dbReference>
<dbReference type="NCBIfam" id="NF003392">
    <property type="entry name" value="PRK04542.1"/>
    <property type="match status" value="1"/>
</dbReference>
<dbReference type="NCBIfam" id="TIGR02178">
    <property type="entry name" value="yeiP"/>
    <property type="match status" value="1"/>
</dbReference>
<dbReference type="PANTHER" id="PTHR30053">
    <property type="entry name" value="ELONGATION FACTOR P"/>
    <property type="match status" value="1"/>
</dbReference>
<dbReference type="PANTHER" id="PTHR30053:SF14">
    <property type="entry name" value="TRANSLATION ELONGATION FACTOR KOW-LIKE DOMAIN-CONTAINING PROTEIN"/>
    <property type="match status" value="1"/>
</dbReference>
<dbReference type="Pfam" id="PF01132">
    <property type="entry name" value="EFP"/>
    <property type="match status" value="1"/>
</dbReference>
<dbReference type="Pfam" id="PF08207">
    <property type="entry name" value="EFP_N"/>
    <property type="match status" value="1"/>
</dbReference>
<dbReference type="Pfam" id="PF09285">
    <property type="entry name" value="Elong-fact-P_C"/>
    <property type="match status" value="1"/>
</dbReference>
<dbReference type="PIRSF" id="PIRSF005901">
    <property type="entry name" value="EF-P"/>
    <property type="match status" value="1"/>
</dbReference>
<dbReference type="SMART" id="SM01185">
    <property type="entry name" value="EFP"/>
    <property type="match status" value="1"/>
</dbReference>
<dbReference type="SMART" id="SM00841">
    <property type="entry name" value="Elong-fact-P_C"/>
    <property type="match status" value="1"/>
</dbReference>
<dbReference type="SUPFAM" id="SSF50249">
    <property type="entry name" value="Nucleic acid-binding proteins"/>
    <property type="match status" value="2"/>
</dbReference>
<dbReference type="SUPFAM" id="SSF50104">
    <property type="entry name" value="Translation proteins SH3-like domain"/>
    <property type="match status" value="1"/>
</dbReference>
<dbReference type="PROSITE" id="PS01275">
    <property type="entry name" value="EFP"/>
    <property type="match status" value="1"/>
</dbReference>
<organism>
    <name type="scientific">Salmonella dublin (strain CT_02021853)</name>
    <dbReference type="NCBI Taxonomy" id="439851"/>
    <lineage>
        <taxon>Bacteria</taxon>
        <taxon>Pseudomonadati</taxon>
        <taxon>Pseudomonadota</taxon>
        <taxon>Gammaproteobacteria</taxon>
        <taxon>Enterobacterales</taxon>
        <taxon>Enterobacteriaceae</taxon>
        <taxon>Salmonella</taxon>
    </lineage>
</organism>
<comment type="similarity">
    <text evidence="1">Belongs to the elongation factor P family.</text>
</comment>
<reference key="1">
    <citation type="journal article" date="2011" name="J. Bacteriol.">
        <title>Comparative genomics of 28 Salmonella enterica isolates: evidence for CRISPR-mediated adaptive sublineage evolution.</title>
        <authorList>
            <person name="Fricke W.F."/>
            <person name="Mammel M.K."/>
            <person name="McDermott P.F."/>
            <person name="Tartera C."/>
            <person name="White D.G."/>
            <person name="Leclerc J.E."/>
            <person name="Ravel J."/>
            <person name="Cebula T.A."/>
        </authorList>
    </citation>
    <scope>NUCLEOTIDE SEQUENCE [LARGE SCALE GENOMIC DNA]</scope>
    <source>
        <strain>CT_02021853</strain>
    </source>
</reference>
<sequence>MPRANEIKKGMVLNYNGKLLIVKDIDIQSPTARGAATLYKMRFSDVRTGLKVEERFKGDDIVDTVTLSRRGVDFSYVDGNEYVFMDKEDYTPYTFTKDQIEEELLFMPEGGMPDMQVLTWDGQLLALELPQTVDLEIVETAPGIKGASASARNKPATLSTGLVIQVPEYLSAGEKIRIHIEERRYMGRAD</sequence>
<protein>
    <recommendedName>
        <fullName evidence="1">Elongation factor P-like protein</fullName>
    </recommendedName>
</protein>
<accession>B5FNL7</accession>